<accession>Q5M4X0</accession>
<sequence>MKKDIHPDYRPVVFMDTTTGYQFLSGSTKHSNETVEFEGETYPLIRVEISSDSHPFYTGRQKFTQADGRVDRFNKKYGLK</sequence>
<reference key="1">
    <citation type="journal article" date="2004" name="Nat. Biotechnol.">
        <title>Complete sequence and comparative genome analysis of the dairy bacterium Streptococcus thermophilus.</title>
        <authorList>
            <person name="Bolotin A."/>
            <person name="Quinquis B."/>
            <person name="Renault P."/>
            <person name="Sorokin A."/>
            <person name="Ehrlich S.D."/>
            <person name="Kulakauskas S."/>
            <person name="Lapidus A."/>
            <person name="Goltsman E."/>
            <person name="Mazur M."/>
            <person name="Pusch G.D."/>
            <person name="Fonstein M."/>
            <person name="Overbeek R."/>
            <person name="Kyprides N."/>
            <person name="Purnelle B."/>
            <person name="Prozzi D."/>
            <person name="Ngui K."/>
            <person name="Masuy D."/>
            <person name="Hancy F."/>
            <person name="Burteau S."/>
            <person name="Boutry M."/>
            <person name="Delcour J."/>
            <person name="Goffeau A."/>
            <person name="Hols P."/>
        </authorList>
    </citation>
    <scope>NUCLEOTIDE SEQUENCE [LARGE SCALE GENOMIC DNA]</scope>
    <source>
        <strain>ATCC BAA-250 / LMG 18311</strain>
    </source>
</reference>
<evidence type="ECO:0000255" key="1">
    <source>
        <dbReference type="HAMAP-Rule" id="MF_00502"/>
    </source>
</evidence>
<evidence type="ECO:0000305" key="2"/>
<feature type="chain" id="PRO_0000173277" description="Large ribosomal subunit protein bL31B">
    <location>
        <begin position="1"/>
        <end position="80"/>
    </location>
</feature>
<gene>
    <name evidence="1" type="primary">rpmE2</name>
    <name type="synonym">rpmE</name>
    <name type="ordered locus">stu0746</name>
</gene>
<organism>
    <name type="scientific">Streptococcus thermophilus (strain ATCC BAA-250 / LMG 18311)</name>
    <dbReference type="NCBI Taxonomy" id="264199"/>
    <lineage>
        <taxon>Bacteria</taxon>
        <taxon>Bacillati</taxon>
        <taxon>Bacillota</taxon>
        <taxon>Bacilli</taxon>
        <taxon>Lactobacillales</taxon>
        <taxon>Streptococcaceae</taxon>
        <taxon>Streptococcus</taxon>
    </lineage>
</organism>
<keyword id="KW-1185">Reference proteome</keyword>
<keyword id="KW-0687">Ribonucleoprotein</keyword>
<keyword id="KW-0689">Ribosomal protein</keyword>
<proteinExistence type="inferred from homology"/>
<dbReference type="EMBL" id="CP000023">
    <property type="protein sequence ID" value="AAV60437.1"/>
    <property type="status" value="ALT_INIT"/>
    <property type="molecule type" value="Genomic_DNA"/>
</dbReference>
<dbReference type="RefSeq" id="WP_002945948.1">
    <property type="nucleotide sequence ID" value="NC_006448.1"/>
</dbReference>
<dbReference type="SMR" id="Q5M4X0"/>
<dbReference type="STRING" id="264199.stu0746"/>
<dbReference type="KEGG" id="stl:stu0746"/>
<dbReference type="eggNOG" id="COG0254">
    <property type="taxonomic scope" value="Bacteria"/>
</dbReference>
<dbReference type="HOGENOM" id="CLU_114306_2_2_9"/>
<dbReference type="Proteomes" id="UP000001170">
    <property type="component" value="Chromosome"/>
</dbReference>
<dbReference type="GO" id="GO:1990904">
    <property type="term" value="C:ribonucleoprotein complex"/>
    <property type="evidence" value="ECO:0007669"/>
    <property type="project" value="UniProtKB-KW"/>
</dbReference>
<dbReference type="GO" id="GO:0005840">
    <property type="term" value="C:ribosome"/>
    <property type="evidence" value="ECO:0007669"/>
    <property type="project" value="UniProtKB-KW"/>
</dbReference>
<dbReference type="GO" id="GO:0003735">
    <property type="term" value="F:structural constituent of ribosome"/>
    <property type="evidence" value="ECO:0007669"/>
    <property type="project" value="InterPro"/>
</dbReference>
<dbReference type="GO" id="GO:0006412">
    <property type="term" value="P:translation"/>
    <property type="evidence" value="ECO:0007669"/>
    <property type="project" value="UniProtKB-UniRule"/>
</dbReference>
<dbReference type="Gene3D" id="4.10.830.30">
    <property type="entry name" value="Ribosomal protein L31"/>
    <property type="match status" value="1"/>
</dbReference>
<dbReference type="HAMAP" id="MF_00502">
    <property type="entry name" value="Ribosomal_bL31_2"/>
    <property type="match status" value="1"/>
</dbReference>
<dbReference type="InterPro" id="IPR034704">
    <property type="entry name" value="Ribosomal_bL28/bL31-like_sf"/>
</dbReference>
<dbReference type="InterPro" id="IPR002150">
    <property type="entry name" value="Ribosomal_bL31"/>
</dbReference>
<dbReference type="InterPro" id="IPR027493">
    <property type="entry name" value="Ribosomal_bL31_B"/>
</dbReference>
<dbReference type="InterPro" id="IPR042105">
    <property type="entry name" value="Ribosomal_bL31_sf"/>
</dbReference>
<dbReference type="NCBIfam" id="TIGR00105">
    <property type="entry name" value="L31"/>
    <property type="match status" value="1"/>
</dbReference>
<dbReference type="NCBIfam" id="NF002462">
    <property type="entry name" value="PRK01678.1"/>
    <property type="match status" value="1"/>
</dbReference>
<dbReference type="PANTHER" id="PTHR33280">
    <property type="entry name" value="50S RIBOSOMAL PROTEIN L31, CHLOROPLASTIC"/>
    <property type="match status" value="1"/>
</dbReference>
<dbReference type="PANTHER" id="PTHR33280:SF1">
    <property type="entry name" value="LARGE RIBOSOMAL SUBUNIT PROTEIN BL31C"/>
    <property type="match status" value="1"/>
</dbReference>
<dbReference type="Pfam" id="PF01197">
    <property type="entry name" value="Ribosomal_L31"/>
    <property type="match status" value="1"/>
</dbReference>
<dbReference type="PRINTS" id="PR01249">
    <property type="entry name" value="RIBOSOMALL31"/>
</dbReference>
<dbReference type="SUPFAM" id="SSF143800">
    <property type="entry name" value="L28p-like"/>
    <property type="match status" value="1"/>
</dbReference>
<dbReference type="PROSITE" id="PS01143">
    <property type="entry name" value="RIBOSOMAL_L31"/>
    <property type="match status" value="1"/>
</dbReference>
<protein>
    <recommendedName>
        <fullName evidence="1">Large ribosomal subunit protein bL31B</fullName>
    </recommendedName>
    <alternativeName>
        <fullName evidence="2">50S ribosomal protein L31 type B</fullName>
    </alternativeName>
</protein>
<comment type="subunit">
    <text evidence="1">Part of the 50S ribosomal subunit.</text>
</comment>
<comment type="similarity">
    <text evidence="1">Belongs to the bacterial ribosomal protein bL31 family. Type B subfamily.</text>
</comment>
<comment type="sequence caution" evidence="2">
    <conflict type="erroneous initiation">
        <sequence resource="EMBL-CDS" id="AAV60437"/>
    </conflict>
</comment>
<name>RL31B_STRT2</name>